<accession>Q18BW7</accession>
<gene>
    <name evidence="2" type="primary">folE</name>
    <name type="ordered locus">CD630_14490</name>
</gene>
<name>GCH1_CLOD6</name>
<protein>
    <recommendedName>
        <fullName evidence="2">GTP cyclohydrolase 1</fullName>
        <ecNumber evidence="2">3.5.4.16</ecNumber>
    </recommendedName>
    <alternativeName>
        <fullName evidence="2">GTP cyclohydrolase I</fullName>
        <shortName evidence="2">GTP-CH-I</shortName>
    </alternativeName>
</protein>
<dbReference type="EC" id="3.5.4.16" evidence="2"/>
<dbReference type="EMBL" id="AM180355">
    <property type="protein sequence ID" value="CAJ68314.1"/>
    <property type="molecule type" value="Genomic_DNA"/>
</dbReference>
<dbReference type="RefSeq" id="WP_003429416.1">
    <property type="nucleotide sequence ID" value="NZ_JAUPES010000040.1"/>
</dbReference>
<dbReference type="RefSeq" id="YP_001087950.1">
    <property type="nucleotide sequence ID" value="NC_009089.1"/>
</dbReference>
<dbReference type="SMR" id="Q18BW7"/>
<dbReference type="STRING" id="272563.CD630_14490"/>
<dbReference type="EnsemblBacteria" id="CAJ68314">
    <property type="protein sequence ID" value="CAJ68314"/>
    <property type="gene ID" value="CD630_14490"/>
</dbReference>
<dbReference type="GeneID" id="66353855"/>
<dbReference type="KEGG" id="cdf:CD630_14490"/>
<dbReference type="KEGG" id="pdc:CDIF630_01613"/>
<dbReference type="PATRIC" id="fig|272563.120.peg.1518"/>
<dbReference type="eggNOG" id="COG0302">
    <property type="taxonomic scope" value="Bacteria"/>
</dbReference>
<dbReference type="OrthoDB" id="9801207at2"/>
<dbReference type="PhylomeDB" id="Q18BW7"/>
<dbReference type="BioCyc" id="PDIF272563:G12WB-1586-MONOMER"/>
<dbReference type="UniPathway" id="UPA00848">
    <property type="reaction ID" value="UER00151"/>
</dbReference>
<dbReference type="Proteomes" id="UP000001978">
    <property type="component" value="Chromosome"/>
</dbReference>
<dbReference type="GO" id="GO:0005737">
    <property type="term" value="C:cytoplasm"/>
    <property type="evidence" value="ECO:0007669"/>
    <property type="project" value="TreeGrafter"/>
</dbReference>
<dbReference type="GO" id="GO:0005525">
    <property type="term" value="F:GTP binding"/>
    <property type="evidence" value="ECO:0007669"/>
    <property type="project" value="UniProtKB-KW"/>
</dbReference>
<dbReference type="GO" id="GO:0003934">
    <property type="term" value="F:GTP cyclohydrolase I activity"/>
    <property type="evidence" value="ECO:0007669"/>
    <property type="project" value="UniProtKB-UniRule"/>
</dbReference>
<dbReference type="GO" id="GO:0008270">
    <property type="term" value="F:zinc ion binding"/>
    <property type="evidence" value="ECO:0007669"/>
    <property type="project" value="UniProtKB-UniRule"/>
</dbReference>
<dbReference type="GO" id="GO:0006730">
    <property type="term" value="P:one-carbon metabolic process"/>
    <property type="evidence" value="ECO:0007669"/>
    <property type="project" value="UniProtKB-UniRule"/>
</dbReference>
<dbReference type="GO" id="GO:0006729">
    <property type="term" value="P:tetrahydrobiopterin biosynthetic process"/>
    <property type="evidence" value="ECO:0007669"/>
    <property type="project" value="TreeGrafter"/>
</dbReference>
<dbReference type="GO" id="GO:0046654">
    <property type="term" value="P:tetrahydrofolate biosynthetic process"/>
    <property type="evidence" value="ECO:0007669"/>
    <property type="project" value="UniProtKB-UniRule"/>
</dbReference>
<dbReference type="FunFam" id="1.10.286.10:FF:000001">
    <property type="entry name" value="GTP cyclohydrolase 1"/>
    <property type="match status" value="1"/>
</dbReference>
<dbReference type="FunFam" id="3.30.1130.10:FF:000001">
    <property type="entry name" value="GTP cyclohydrolase 1"/>
    <property type="match status" value="1"/>
</dbReference>
<dbReference type="Gene3D" id="1.10.286.10">
    <property type="match status" value="1"/>
</dbReference>
<dbReference type="Gene3D" id="3.30.1130.10">
    <property type="match status" value="1"/>
</dbReference>
<dbReference type="HAMAP" id="MF_00223">
    <property type="entry name" value="FolE"/>
    <property type="match status" value="1"/>
</dbReference>
<dbReference type="InterPro" id="IPR043133">
    <property type="entry name" value="GTP-CH-I_C/QueF"/>
</dbReference>
<dbReference type="InterPro" id="IPR043134">
    <property type="entry name" value="GTP-CH-I_N"/>
</dbReference>
<dbReference type="InterPro" id="IPR001474">
    <property type="entry name" value="GTP_CycHdrlase_I"/>
</dbReference>
<dbReference type="InterPro" id="IPR018234">
    <property type="entry name" value="GTP_CycHdrlase_I_CS"/>
</dbReference>
<dbReference type="InterPro" id="IPR020602">
    <property type="entry name" value="GTP_CycHdrlase_I_dom"/>
</dbReference>
<dbReference type="NCBIfam" id="TIGR00063">
    <property type="entry name" value="folE"/>
    <property type="match status" value="1"/>
</dbReference>
<dbReference type="NCBIfam" id="NF006825">
    <property type="entry name" value="PRK09347.1-2"/>
    <property type="match status" value="1"/>
</dbReference>
<dbReference type="NCBIfam" id="NF006826">
    <property type="entry name" value="PRK09347.1-3"/>
    <property type="match status" value="1"/>
</dbReference>
<dbReference type="PANTHER" id="PTHR11109:SF7">
    <property type="entry name" value="GTP CYCLOHYDROLASE 1"/>
    <property type="match status" value="1"/>
</dbReference>
<dbReference type="PANTHER" id="PTHR11109">
    <property type="entry name" value="GTP CYCLOHYDROLASE I"/>
    <property type="match status" value="1"/>
</dbReference>
<dbReference type="Pfam" id="PF01227">
    <property type="entry name" value="GTP_cyclohydroI"/>
    <property type="match status" value="1"/>
</dbReference>
<dbReference type="SUPFAM" id="SSF55620">
    <property type="entry name" value="Tetrahydrobiopterin biosynthesis enzymes-like"/>
    <property type="match status" value="1"/>
</dbReference>
<dbReference type="PROSITE" id="PS00859">
    <property type="entry name" value="GTP_CYCLOHYDROL_1_1"/>
    <property type="match status" value="1"/>
</dbReference>
<dbReference type="PROSITE" id="PS00860">
    <property type="entry name" value="GTP_CYCLOHYDROL_1_2"/>
    <property type="match status" value="1"/>
</dbReference>
<comment type="catalytic activity">
    <reaction evidence="2">
        <text>GTP + H2O = 7,8-dihydroneopterin 3'-triphosphate + formate + H(+)</text>
        <dbReference type="Rhea" id="RHEA:17473"/>
        <dbReference type="ChEBI" id="CHEBI:15377"/>
        <dbReference type="ChEBI" id="CHEBI:15378"/>
        <dbReference type="ChEBI" id="CHEBI:15740"/>
        <dbReference type="ChEBI" id="CHEBI:37565"/>
        <dbReference type="ChEBI" id="CHEBI:58462"/>
        <dbReference type="EC" id="3.5.4.16"/>
    </reaction>
</comment>
<comment type="pathway">
    <text evidence="2">Cofactor biosynthesis; 7,8-dihydroneopterin triphosphate biosynthesis; 7,8-dihydroneopterin triphosphate from GTP: step 1/1.</text>
</comment>
<comment type="subunit">
    <text evidence="1">Toroid-shaped homodecamer, composed of two pentamers of five dimers.</text>
</comment>
<comment type="similarity">
    <text evidence="2">Belongs to the GTP cyclohydrolase I family.</text>
</comment>
<sequence>MNKVDKEKIQHAVREILEAIGEDPDREGLIETPNRVARMYEEIFSGLSEEPRDHLKVLFADEKHEELVLVKDIPFYSCCEHHLVPFFGKAHIAYLPKGGRLTGLSKLARVIDTLAKRPQLQERITKNAADIIMEELQPYGVLVVVEAEHMCMTMRGVKKPGSKTVTSAVRGIFEKDIASRAEAMSLITMK</sequence>
<organism>
    <name type="scientific">Clostridioides difficile (strain 630)</name>
    <name type="common">Peptoclostridium difficile</name>
    <dbReference type="NCBI Taxonomy" id="272563"/>
    <lineage>
        <taxon>Bacteria</taxon>
        <taxon>Bacillati</taxon>
        <taxon>Bacillota</taxon>
        <taxon>Clostridia</taxon>
        <taxon>Peptostreptococcales</taxon>
        <taxon>Peptostreptococcaceae</taxon>
        <taxon>Clostridioides</taxon>
    </lineage>
</organism>
<keyword id="KW-0342">GTP-binding</keyword>
<keyword id="KW-0378">Hydrolase</keyword>
<keyword id="KW-0479">Metal-binding</keyword>
<keyword id="KW-0547">Nucleotide-binding</keyword>
<keyword id="KW-0554">One-carbon metabolism</keyword>
<keyword id="KW-1185">Reference proteome</keyword>
<keyword id="KW-0862">Zinc</keyword>
<reference key="1">
    <citation type="journal article" date="2006" name="Nat. Genet.">
        <title>The multidrug-resistant human pathogen Clostridium difficile has a highly mobile, mosaic genome.</title>
        <authorList>
            <person name="Sebaihia M."/>
            <person name="Wren B.W."/>
            <person name="Mullany P."/>
            <person name="Fairweather N.F."/>
            <person name="Minton N."/>
            <person name="Stabler R."/>
            <person name="Thomson N.R."/>
            <person name="Roberts A.P."/>
            <person name="Cerdeno-Tarraga A.M."/>
            <person name="Wang H."/>
            <person name="Holden M.T.G."/>
            <person name="Wright A."/>
            <person name="Churcher C."/>
            <person name="Quail M.A."/>
            <person name="Baker S."/>
            <person name="Bason N."/>
            <person name="Brooks K."/>
            <person name="Chillingworth T."/>
            <person name="Cronin A."/>
            <person name="Davis P."/>
            <person name="Dowd L."/>
            <person name="Fraser A."/>
            <person name="Feltwell T."/>
            <person name="Hance Z."/>
            <person name="Holroyd S."/>
            <person name="Jagels K."/>
            <person name="Moule S."/>
            <person name="Mungall K."/>
            <person name="Price C."/>
            <person name="Rabbinowitsch E."/>
            <person name="Sharp S."/>
            <person name="Simmonds M."/>
            <person name="Stevens K."/>
            <person name="Unwin L."/>
            <person name="Whithead S."/>
            <person name="Dupuy B."/>
            <person name="Dougan G."/>
            <person name="Barrell B."/>
            <person name="Parkhill J."/>
        </authorList>
    </citation>
    <scope>NUCLEOTIDE SEQUENCE [LARGE SCALE GENOMIC DNA]</scope>
    <source>
        <strain>630</strain>
    </source>
</reference>
<feature type="chain" id="PRO_1000043681" description="GTP cyclohydrolase 1">
    <location>
        <begin position="1"/>
        <end position="190"/>
    </location>
</feature>
<feature type="binding site" evidence="2">
    <location>
        <position position="79"/>
    </location>
    <ligand>
        <name>Zn(2+)</name>
        <dbReference type="ChEBI" id="CHEBI:29105"/>
    </ligand>
</feature>
<feature type="binding site" evidence="2">
    <location>
        <position position="82"/>
    </location>
    <ligand>
        <name>Zn(2+)</name>
        <dbReference type="ChEBI" id="CHEBI:29105"/>
    </ligand>
</feature>
<feature type="binding site" evidence="2">
    <location>
        <position position="151"/>
    </location>
    <ligand>
        <name>Zn(2+)</name>
        <dbReference type="ChEBI" id="CHEBI:29105"/>
    </ligand>
</feature>
<proteinExistence type="inferred from homology"/>
<evidence type="ECO:0000250" key="1"/>
<evidence type="ECO:0000255" key="2">
    <source>
        <dbReference type="HAMAP-Rule" id="MF_00223"/>
    </source>
</evidence>